<organism>
    <name type="scientific">Homo sapiens</name>
    <name type="common">Human</name>
    <dbReference type="NCBI Taxonomy" id="9606"/>
    <lineage>
        <taxon>Eukaryota</taxon>
        <taxon>Metazoa</taxon>
        <taxon>Chordata</taxon>
        <taxon>Craniata</taxon>
        <taxon>Vertebrata</taxon>
        <taxon>Euteleostomi</taxon>
        <taxon>Mammalia</taxon>
        <taxon>Eutheria</taxon>
        <taxon>Euarchontoglires</taxon>
        <taxon>Primates</taxon>
        <taxon>Haplorrhini</taxon>
        <taxon>Catarrhini</taxon>
        <taxon>Hominidae</taxon>
        <taxon>Homo</taxon>
    </lineage>
</organism>
<reference key="1">
    <citation type="journal article" date="1998" name="Nucleic Acids Res.">
        <title>p59OASL, a 2'-5' oligoadenylate synthetase like protein: a novel human gene related to the 2'-5' oligoadenylate synthetase family.</title>
        <authorList>
            <person name="Hartmann R."/>
            <person name="Olsen H.S."/>
            <person name="Widder S."/>
            <person name="Joergensen R."/>
            <person name="Justesen J."/>
        </authorList>
    </citation>
    <scope>NUCLEOTIDE SEQUENCE [MRNA] (ISOFORM P56)</scope>
</reference>
<reference key="2">
    <citation type="journal article" date="1998" name="Eur. J. Biochem.">
        <title>Molecular cloning and characterization of two related and interferon-induced 56-kDa and 30-kDa proteins highly similar to 2'-5' oligoadenylate synthetase.</title>
        <authorList>
            <person name="Rebouillat D."/>
            <person name="Marie I."/>
            <person name="Hovanessian A.G."/>
        </authorList>
    </citation>
    <scope>NUCLEOTIDE SEQUENCE [MRNA] (ISOFORMS P56 AND P30)</scope>
    <scope>FUNCTION</scope>
    <scope>SUBCELLULAR LOCATION</scope>
    <source>
        <tissue>Monocyte</tissue>
    </source>
</reference>
<reference key="3">
    <citation type="journal article" date="2012" name="Int. J. Biochem. Cell Biol.">
        <title>Identification of OASL d, a splice variant of human OASL, with antiviral activity.</title>
        <authorList>
            <person name="Guo X."/>
            <person name="Li X."/>
            <person name="Xu Y."/>
            <person name="Sun T."/>
            <person name="Yang G."/>
            <person name="Wu Z."/>
            <person name="Li E."/>
        </authorList>
    </citation>
    <scope>NUCLEOTIDE SEQUENCE [MRNA] (ISOFORM 3)</scope>
</reference>
<reference key="4">
    <citation type="journal article" date="2004" name="Nat. Genet.">
        <title>Complete sequencing and characterization of 21,243 full-length human cDNAs.</title>
        <authorList>
            <person name="Ota T."/>
            <person name="Suzuki Y."/>
            <person name="Nishikawa T."/>
            <person name="Otsuki T."/>
            <person name="Sugiyama T."/>
            <person name="Irie R."/>
            <person name="Wakamatsu A."/>
            <person name="Hayashi K."/>
            <person name="Sato H."/>
            <person name="Nagai K."/>
            <person name="Kimura K."/>
            <person name="Makita H."/>
            <person name="Sekine M."/>
            <person name="Obayashi M."/>
            <person name="Nishi T."/>
            <person name="Shibahara T."/>
            <person name="Tanaka T."/>
            <person name="Ishii S."/>
            <person name="Yamamoto J."/>
            <person name="Saito K."/>
            <person name="Kawai Y."/>
            <person name="Isono Y."/>
            <person name="Nakamura Y."/>
            <person name="Nagahari K."/>
            <person name="Murakami K."/>
            <person name="Yasuda T."/>
            <person name="Iwayanagi T."/>
            <person name="Wagatsuma M."/>
            <person name="Shiratori A."/>
            <person name="Sudo H."/>
            <person name="Hosoiri T."/>
            <person name="Kaku Y."/>
            <person name="Kodaira H."/>
            <person name="Kondo H."/>
            <person name="Sugawara M."/>
            <person name="Takahashi M."/>
            <person name="Kanda K."/>
            <person name="Yokoi T."/>
            <person name="Furuya T."/>
            <person name="Kikkawa E."/>
            <person name="Omura Y."/>
            <person name="Abe K."/>
            <person name="Kamihara K."/>
            <person name="Katsuta N."/>
            <person name="Sato K."/>
            <person name="Tanikawa M."/>
            <person name="Yamazaki M."/>
            <person name="Ninomiya K."/>
            <person name="Ishibashi T."/>
            <person name="Yamashita H."/>
            <person name="Murakawa K."/>
            <person name="Fujimori K."/>
            <person name="Tanai H."/>
            <person name="Kimata M."/>
            <person name="Watanabe M."/>
            <person name="Hiraoka S."/>
            <person name="Chiba Y."/>
            <person name="Ishida S."/>
            <person name="Ono Y."/>
            <person name="Takiguchi S."/>
            <person name="Watanabe S."/>
            <person name="Yosida M."/>
            <person name="Hotuta T."/>
            <person name="Kusano J."/>
            <person name="Kanehori K."/>
            <person name="Takahashi-Fujii A."/>
            <person name="Hara H."/>
            <person name="Tanase T.-O."/>
            <person name="Nomura Y."/>
            <person name="Togiya S."/>
            <person name="Komai F."/>
            <person name="Hara R."/>
            <person name="Takeuchi K."/>
            <person name="Arita M."/>
            <person name="Imose N."/>
            <person name="Musashino K."/>
            <person name="Yuuki H."/>
            <person name="Oshima A."/>
            <person name="Sasaki N."/>
            <person name="Aotsuka S."/>
            <person name="Yoshikawa Y."/>
            <person name="Matsunawa H."/>
            <person name="Ichihara T."/>
            <person name="Shiohata N."/>
            <person name="Sano S."/>
            <person name="Moriya S."/>
            <person name="Momiyama H."/>
            <person name="Satoh N."/>
            <person name="Takami S."/>
            <person name="Terashima Y."/>
            <person name="Suzuki O."/>
            <person name="Nakagawa S."/>
            <person name="Senoh A."/>
            <person name="Mizoguchi H."/>
            <person name="Goto Y."/>
            <person name="Shimizu F."/>
            <person name="Wakebe H."/>
            <person name="Hishigaki H."/>
            <person name="Watanabe T."/>
            <person name="Sugiyama A."/>
            <person name="Takemoto M."/>
            <person name="Kawakami B."/>
            <person name="Yamazaki M."/>
            <person name="Watanabe K."/>
            <person name="Kumagai A."/>
            <person name="Itakura S."/>
            <person name="Fukuzumi Y."/>
            <person name="Fujimori Y."/>
            <person name="Komiyama M."/>
            <person name="Tashiro H."/>
            <person name="Tanigami A."/>
            <person name="Fujiwara T."/>
            <person name="Ono T."/>
            <person name="Yamada K."/>
            <person name="Fujii Y."/>
            <person name="Ozaki K."/>
            <person name="Hirao M."/>
            <person name="Ohmori Y."/>
            <person name="Kawabata A."/>
            <person name="Hikiji T."/>
            <person name="Kobatake N."/>
            <person name="Inagaki H."/>
            <person name="Ikema Y."/>
            <person name="Okamoto S."/>
            <person name="Okitani R."/>
            <person name="Kawakami T."/>
            <person name="Noguchi S."/>
            <person name="Itoh T."/>
            <person name="Shigeta K."/>
            <person name="Senba T."/>
            <person name="Matsumura K."/>
            <person name="Nakajima Y."/>
            <person name="Mizuno T."/>
            <person name="Morinaga M."/>
            <person name="Sasaki M."/>
            <person name="Togashi T."/>
            <person name="Oyama M."/>
            <person name="Hata H."/>
            <person name="Watanabe M."/>
            <person name="Komatsu T."/>
            <person name="Mizushima-Sugano J."/>
            <person name="Satoh T."/>
            <person name="Shirai Y."/>
            <person name="Takahashi Y."/>
            <person name="Nakagawa K."/>
            <person name="Okumura K."/>
            <person name="Nagase T."/>
            <person name="Nomura N."/>
            <person name="Kikuchi H."/>
            <person name="Masuho Y."/>
            <person name="Yamashita R."/>
            <person name="Nakai K."/>
            <person name="Yada T."/>
            <person name="Nakamura Y."/>
            <person name="Ohara O."/>
            <person name="Isogai T."/>
            <person name="Sugano S."/>
        </authorList>
    </citation>
    <scope>NUCLEOTIDE SEQUENCE [LARGE SCALE MRNA] (ISOFORM P56)</scope>
    <source>
        <tissue>Mammary gland</tissue>
    </source>
</reference>
<reference key="5">
    <citation type="journal article" date="2006" name="Nature">
        <title>The finished DNA sequence of human chromosome 12.</title>
        <authorList>
            <person name="Scherer S.E."/>
            <person name="Muzny D.M."/>
            <person name="Buhay C.J."/>
            <person name="Chen R."/>
            <person name="Cree A."/>
            <person name="Ding Y."/>
            <person name="Dugan-Rocha S."/>
            <person name="Gill R."/>
            <person name="Gunaratne P."/>
            <person name="Harris R.A."/>
            <person name="Hawes A.C."/>
            <person name="Hernandez J."/>
            <person name="Hodgson A.V."/>
            <person name="Hume J."/>
            <person name="Jackson A."/>
            <person name="Khan Z.M."/>
            <person name="Kovar-Smith C."/>
            <person name="Lewis L.R."/>
            <person name="Lozado R.J."/>
            <person name="Metzker M.L."/>
            <person name="Milosavljevic A."/>
            <person name="Miner G.R."/>
            <person name="Montgomery K.T."/>
            <person name="Morgan M.B."/>
            <person name="Nazareth L.V."/>
            <person name="Scott G."/>
            <person name="Sodergren E."/>
            <person name="Song X.-Z."/>
            <person name="Steffen D."/>
            <person name="Lovering R.C."/>
            <person name="Wheeler D.A."/>
            <person name="Worley K.C."/>
            <person name="Yuan Y."/>
            <person name="Zhang Z."/>
            <person name="Adams C.Q."/>
            <person name="Ansari-Lari M.A."/>
            <person name="Ayele M."/>
            <person name="Brown M.J."/>
            <person name="Chen G."/>
            <person name="Chen Z."/>
            <person name="Clerc-Blankenburg K.P."/>
            <person name="Davis C."/>
            <person name="Delgado O."/>
            <person name="Dinh H.H."/>
            <person name="Draper H."/>
            <person name="Gonzalez-Garay M.L."/>
            <person name="Havlak P."/>
            <person name="Jackson L.R."/>
            <person name="Jacob L.S."/>
            <person name="Kelly S.H."/>
            <person name="Li L."/>
            <person name="Li Z."/>
            <person name="Liu J."/>
            <person name="Liu W."/>
            <person name="Lu J."/>
            <person name="Maheshwari M."/>
            <person name="Nguyen B.-V."/>
            <person name="Okwuonu G.O."/>
            <person name="Pasternak S."/>
            <person name="Perez L.M."/>
            <person name="Plopper F.J.H."/>
            <person name="Santibanez J."/>
            <person name="Shen H."/>
            <person name="Tabor P.E."/>
            <person name="Verduzco D."/>
            <person name="Waldron L."/>
            <person name="Wang Q."/>
            <person name="Williams G.A."/>
            <person name="Zhang J."/>
            <person name="Zhou J."/>
            <person name="Allen C.C."/>
            <person name="Amin A.G."/>
            <person name="Anyalebechi V."/>
            <person name="Bailey M."/>
            <person name="Barbaria J.A."/>
            <person name="Bimage K.E."/>
            <person name="Bryant N.P."/>
            <person name="Burch P.E."/>
            <person name="Burkett C.E."/>
            <person name="Burrell K.L."/>
            <person name="Calderon E."/>
            <person name="Cardenas V."/>
            <person name="Carter K."/>
            <person name="Casias K."/>
            <person name="Cavazos I."/>
            <person name="Cavazos S.R."/>
            <person name="Ceasar H."/>
            <person name="Chacko J."/>
            <person name="Chan S.N."/>
            <person name="Chavez D."/>
            <person name="Christopoulos C."/>
            <person name="Chu J."/>
            <person name="Cockrell R."/>
            <person name="Cox C.D."/>
            <person name="Dang M."/>
            <person name="Dathorne S.R."/>
            <person name="David R."/>
            <person name="Davis C.M."/>
            <person name="Davy-Carroll L."/>
            <person name="Deshazo D.R."/>
            <person name="Donlin J.E."/>
            <person name="D'Souza L."/>
            <person name="Eaves K.A."/>
            <person name="Egan A."/>
            <person name="Emery-Cohen A.J."/>
            <person name="Escotto M."/>
            <person name="Flagg N."/>
            <person name="Forbes L.D."/>
            <person name="Gabisi A.M."/>
            <person name="Garza M."/>
            <person name="Hamilton C."/>
            <person name="Henderson N."/>
            <person name="Hernandez O."/>
            <person name="Hines S."/>
            <person name="Hogues M.E."/>
            <person name="Huang M."/>
            <person name="Idlebird D.G."/>
            <person name="Johnson R."/>
            <person name="Jolivet A."/>
            <person name="Jones S."/>
            <person name="Kagan R."/>
            <person name="King L.M."/>
            <person name="Leal B."/>
            <person name="Lebow H."/>
            <person name="Lee S."/>
            <person name="LeVan J.M."/>
            <person name="Lewis L.C."/>
            <person name="London P."/>
            <person name="Lorensuhewa L.M."/>
            <person name="Loulseged H."/>
            <person name="Lovett D.A."/>
            <person name="Lucier A."/>
            <person name="Lucier R.L."/>
            <person name="Ma J."/>
            <person name="Madu R.C."/>
            <person name="Mapua P."/>
            <person name="Martindale A.D."/>
            <person name="Martinez E."/>
            <person name="Massey E."/>
            <person name="Mawhiney S."/>
            <person name="Meador M.G."/>
            <person name="Mendez S."/>
            <person name="Mercado C."/>
            <person name="Mercado I.C."/>
            <person name="Merritt C.E."/>
            <person name="Miner Z.L."/>
            <person name="Minja E."/>
            <person name="Mitchell T."/>
            <person name="Mohabbat F."/>
            <person name="Mohabbat K."/>
            <person name="Montgomery B."/>
            <person name="Moore N."/>
            <person name="Morris S."/>
            <person name="Munidasa M."/>
            <person name="Ngo R.N."/>
            <person name="Nguyen N.B."/>
            <person name="Nickerson E."/>
            <person name="Nwaokelemeh O.O."/>
            <person name="Nwokenkwo S."/>
            <person name="Obregon M."/>
            <person name="Oguh M."/>
            <person name="Oragunye N."/>
            <person name="Oviedo R.J."/>
            <person name="Parish B.J."/>
            <person name="Parker D.N."/>
            <person name="Parrish J."/>
            <person name="Parks K.L."/>
            <person name="Paul H.A."/>
            <person name="Payton B.A."/>
            <person name="Perez A."/>
            <person name="Perrin W."/>
            <person name="Pickens A."/>
            <person name="Primus E.L."/>
            <person name="Pu L.-L."/>
            <person name="Puazo M."/>
            <person name="Quiles M.M."/>
            <person name="Quiroz J.B."/>
            <person name="Rabata D."/>
            <person name="Reeves K."/>
            <person name="Ruiz S.J."/>
            <person name="Shao H."/>
            <person name="Sisson I."/>
            <person name="Sonaike T."/>
            <person name="Sorelle R.P."/>
            <person name="Sutton A.E."/>
            <person name="Svatek A.F."/>
            <person name="Svetz L.A."/>
            <person name="Tamerisa K.S."/>
            <person name="Taylor T.R."/>
            <person name="Teague B."/>
            <person name="Thomas N."/>
            <person name="Thorn R.D."/>
            <person name="Trejos Z.Y."/>
            <person name="Trevino B.K."/>
            <person name="Ukegbu O.N."/>
            <person name="Urban J.B."/>
            <person name="Vasquez L.I."/>
            <person name="Vera V.A."/>
            <person name="Villasana D.M."/>
            <person name="Wang L."/>
            <person name="Ward-Moore S."/>
            <person name="Warren J.T."/>
            <person name="Wei X."/>
            <person name="White F."/>
            <person name="Williamson A.L."/>
            <person name="Wleczyk R."/>
            <person name="Wooden H.S."/>
            <person name="Wooden S.H."/>
            <person name="Yen J."/>
            <person name="Yoon L."/>
            <person name="Yoon V."/>
            <person name="Zorrilla S.E."/>
            <person name="Nelson D."/>
            <person name="Kucherlapati R."/>
            <person name="Weinstock G."/>
            <person name="Gibbs R.A."/>
        </authorList>
    </citation>
    <scope>NUCLEOTIDE SEQUENCE [LARGE SCALE GENOMIC DNA]</scope>
</reference>
<reference key="6">
    <citation type="journal article" date="2004" name="Genome Res.">
        <title>The status, quality, and expansion of the NIH full-length cDNA project: the Mammalian Gene Collection (MGC).</title>
        <authorList>
            <consortium name="The MGC Project Team"/>
        </authorList>
    </citation>
    <scope>NUCLEOTIDE SEQUENCE [LARGE SCALE MRNA] (ISOFORM P56)</scope>
    <source>
        <tissue>Brain</tissue>
    </source>
</reference>
<reference key="7">
    <citation type="journal article" date="1995" name="Mol. Endocrinol.">
        <title>Two classes of proteins dependent on either the presence or absence of thyroid hormone for interaction with the thyroid hormone receptor.</title>
        <authorList>
            <person name="Lee J.W."/>
            <person name="Choi H.-S."/>
            <person name="Gyuris J."/>
            <person name="Brent R."/>
            <person name="Moore D.D."/>
        </authorList>
    </citation>
    <scope>NUCLEOTIDE SEQUENCE [GENOMIC DNA] OF 260-416 (ISOFORM P56)</scope>
</reference>
<reference key="8">
    <citation type="journal article" date="2004" name="Eur. J. Biochem.">
        <title>Interaction between the 2'-5' oligoadenylate synthetase-like protein p59 OASL and the transcriptional repressor methyl CpG-binding protein 1.</title>
        <authorList>
            <person name="Andersen J.B."/>
            <person name="Strandbygaard D.J."/>
            <person name="Hartmann R."/>
            <person name="Justesen J."/>
        </authorList>
    </citation>
    <scope>INTERACTION WITH MBD1</scope>
    <source>
        <tissue>Leukocyte</tissue>
    </source>
</reference>
<reference key="9">
    <citation type="journal article" date="2007" name="Biochimie">
        <title>The human 2'-5'oligoadenylate synthetase family: unique interferon-inducible enzymes catalyzing 2'-5' instead of 3'-5' phosphodiester bond formation.</title>
        <authorList>
            <person name="Hovanessian A.G."/>
            <person name="Justesen J."/>
        </authorList>
    </citation>
    <scope>REVIEW ON FUNCTION</scope>
</reference>
<reference key="10">
    <citation type="journal article" date="2008" name="J. Gen. Virol.">
        <title>The p59 oligoadenylate synthetase-like protein possesses antiviral activity that requires the C-terminal ubiquitin-like domain.</title>
        <authorList>
            <person name="Marques J."/>
            <person name="Anwar J."/>
            <person name="Eskildsen-Larsen S."/>
            <person name="Rebouillat D."/>
            <person name="Paludan S.R."/>
            <person name="Sen G."/>
            <person name="Williams B.R."/>
            <person name="Hartmann R."/>
        </authorList>
    </citation>
    <scope>FUNCTION</scope>
</reference>
<reference key="11">
    <citation type="journal article" date="2009" name="J. Interferon Cytokine Res.">
        <title>Differential regulation of the OASL and OAS1 genes in response to viral infections.</title>
        <authorList>
            <person name="Melchjorsen J."/>
            <person name="Kristiansen H."/>
            <person name="Christiansen R."/>
            <person name="Rintahaka J."/>
            <person name="Matikainen S."/>
            <person name="Paludan S.R."/>
            <person name="Hartmann R."/>
        </authorList>
    </citation>
    <scope>INDUCTION</scope>
</reference>
<reference key="12">
    <citation type="journal article" date="2009" name="J. Mol. Evol.">
        <title>Evolution of the 2'-5'-oligoadenylate synthetase family in eukaryotes and bacteria.</title>
        <authorList>
            <person name="Kjaer K.H."/>
            <person name="Poulsen J.B."/>
            <person name="Reintamm T."/>
            <person name="Saby E."/>
            <person name="Martensen P.M."/>
            <person name="Kelve M."/>
            <person name="Justesen J."/>
        </authorList>
    </citation>
    <scope>REVIEW</scope>
</reference>
<reference key="13">
    <citation type="journal article" date="2010" name="Biochem. Biophys. Res. Commun.">
        <title>2',5'-Oligoadenylate synthetase-like gene highly induced by hepatitis C virus infection in human liver is inhibitory to viral replication in vitro.</title>
        <authorList>
            <person name="Ishibashi M."/>
            <person name="Wakita T."/>
            <person name="Esumi M."/>
        </authorList>
    </citation>
    <scope>FUNCTION</scope>
    <scope>INDUCTION</scope>
</reference>
<reference key="14">
    <citation type="journal article" date="2011" name="J. Interferon Cytokine Res.">
        <title>The oligoadenylate synthetase family: an ancient protein family with multiple antiviral activities.</title>
        <authorList>
            <person name="Kristiansen H."/>
            <person name="Gad H.H."/>
            <person name="Eskildsen-Larsen S."/>
            <person name="Despres P."/>
            <person name="Hartmann R."/>
        </authorList>
    </citation>
    <scope>REVIEW ON FUNCTION</scope>
</reference>
<reference key="15">
    <citation type="journal article" date="2012" name="Proc. Natl. Acad. Sci. U.S.A.">
        <title>N-terminal acetylome analyses and functional insights of the N-terminal acetyltransferase NatB.</title>
        <authorList>
            <person name="Van Damme P."/>
            <person name="Lasa M."/>
            <person name="Polevoda B."/>
            <person name="Gazquez C."/>
            <person name="Elosegui-Artola A."/>
            <person name="Kim D.S."/>
            <person name="De Juan-Pardo E."/>
            <person name="Demeyer K."/>
            <person name="Hole K."/>
            <person name="Larrea E."/>
            <person name="Timmerman E."/>
            <person name="Prieto J."/>
            <person name="Arnesen T."/>
            <person name="Sherman F."/>
            <person name="Gevaert K."/>
            <person name="Aldabe R."/>
        </authorList>
    </citation>
    <scope>ACETYLATION [LARGE SCALE ANALYSIS] AT ALA-2</scope>
    <scope>CLEAVAGE OF INITIATOR METHIONINE [LARGE SCALE ANALYSIS]</scope>
    <scope>IDENTIFICATION BY MASS SPECTROMETRY [LARGE SCALE ANALYSIS]</scope>
</reference>
<reference key="16">
    <citation type="submission" date="2004-11" db="PDB data bank">
        <title>Solution structure of C-terminal ubiquitin-like domain of human 2'-5'-oligoadenylate synthetase-like protein (p59 OASL).</title>
        <authorList>
            <consortium name="RIKEN structural genomics initiative (RSGI)"/>
        </authorList>
    </citation>
    <scope>STRUCTURE BY NMR OF 432-507</scope>
</reference>
<dbReference type="EMBL" id="AJ225089">
    <property type="protein sequence ID" value="CAA12396.1"/>
    <property type="molecule type" value="mRNA"/>
</dbReference>
<dbReference type="EMBL" id="AF063611">
    <property type="protein sequence ID" value="AAD28541.1"/>
    <property type="molecule type" value="mRNA"/>
</dbReference>
<dbReference type="EMBL" id="AF063612">
    <property type="protein sequence ID" value="AAD28542.1"/>
    <property type="molecule type" value="mRNA"/>
</dbReference>
<dbReference type="EMBL" id="JQ792168">
    <property type="protein sequence ID" value="AFJ00074.1"/>
    <property type="molecule type" value="mRNA"/>
</dbReference>
<dbReference type="EMBL" id="AK314419">
    <property type="protein sequence ID" value="BAG37039.1"/>
    <property type="molecule type" value="mRNA"/>
</dbReference>
<dbReference type="EMBL" id="AC079602">
    <property type="status" value="NOT_ANNOTATED_CDS"/>
    <property type="molecule type" value="Genomic_DNA"/>
</dbReference>
<dbReference type="EMBL" id="Z93097">
    <property type="status" value="NOT_ANNOTATED_CDS"/>
    <property type="molecule type" value="Genomic_DNA"/>
</dbReference>
<dbReference type="EMBL" id="BC117408">
    <property type="protein sequence ID" value="AAI17409.1"/>
    <property type="molecule type" value="mRNA"/>
</dbReference>
<dbReference type="EMBL" id="BC117410">
    <property type="protein sequence ID" value="AAI17411.1"/>
    <property type="molecule type" value="mRNA"/>
</dbReference>
<dbReference type="EMBL" id="L40387">
    <property type="protein sequence ID" value="AAC41733.1"/>
    <property type="status" value="ALT_FRAME"/>
    <property type="molecule type" value="Genomic_DNA"/>
</dbReference>
<dbReference type="CCDS" id="CCDS73536.1">
    <molecule id="Q15646-3"/>
</dbReference>
<dbReference type="CCDS" id="CCDS9211.1">
    <molecule id="Q15646-1"/>
</dbReference>
<dbReference type="CCDS" id="CCDS9212.1">
    <molecule id="Q15646-2"/>
</dbReference>
<dbReference type="RefSeq" id="NP_001248754.1">
    <molecule id="Q15646-3"/>
    <property type="nucleotide sequence ID" value="NM_001261825.2"/>
</dbReference>
<dbReference type="RefSeq" id="NP_001382347.1">
    <molecule id="Q15646-2"/>
    <property type="nucleotide sequence ID" value="NM_001395418.1"/>
</dbReference>
<dbReference type="RefSeq" id="NP_003724.1">
    <molecule id="Q15646-1"/>
    <property type="nucleotide sequence ID" value="NM_003733.4"/>
</dbReference>
<dbReference type="RefSeq" id="NP_937856.1">
    <molecule id="Q15646-2"/>
    <property type="nucleotide sequence ID" value="NM_198213.3"/>
</dbReference>
<dbReference type="RefSeq" id="XP_016875630.1">
    <property type="nucleotide sequence ID" value="XM_017020141.1"/>
</dbReference>
<dbReference type="PDB" id="1WH3">
    <property type="method" value="NMR"/>
    <property type="chains" value="A=434-507"/>
</dbReference>
<dbReference type="PDB" id="4XQ7">
    <property type="method" value="X-ray"/>
    <property type="resolution" value="1.60 A"/>
    <property type="chains" value="A=1-350"/>
</dbReference>
<dbReference type="PDBsum" id="1WH3"/>
<dbReference type="PDBsum" id="4XQ7"/>
<dbReference type="SMR" id="Q15646"/>
<dbReference type="BioGRID" id="114191">
    <property type="interactions" value="277"/>
</dbReference>
<dbReference type="FunCoup" id="Q15646">
    <property type="interactions" value="570"/>
</dbReference>
<dbReference type="IntAct" id="Q15646">
    <property type="interactions" value="217"/>
</dbReference>
<dbReference type="MINT" id="Q15646"/>
<dbReference type="STRING" id="9606.ENSP00000257570"/>
<dbReference type="GlyGen" id="Q15646">
    <property type="glycosylation" value="1 site, 1 O-linked glycan (1 site)"/>
</dbReference>
<dbReference type="iPTMnet" id="Q15646"/>
<dbReference type="PhosphoSitePlus" id="Q15646"/>
<dbReference type="BioMuta" id="OASL"/>
<dbReference type="DMDM" id="6226835"/>
<dbReference type="jPOST" id="Q15646"/>
<dbReference type="MassIVE" id="Q15646"/>
<dbReference type="PaxDb" id="9606-ENSP00000257570"/>
<dbReference type="PeptideAtlas" id="Q15646"/>
<dbReference type="ProteomicsDB" id="60683">
    <molecule id="Q15646-1"/>
</dbReference>
<dbReference type="ProteomicsDB" id="60684">
    <molecule id="Q15646-2"/>
</dbReference>
<dbReference type="Pumba" id="Q15646"/>
<dbReference type="Antibodypedia" id="808">
    <property type="antibodies" value="169 antibodies from 26 providers"/>
</dbReference>
<dbReference type="DNASU" id="8638"/>
<dbReference type="Ensembl" id="ENST00000257570.10">
    <molecule id="Q15646-1"/>
    <property type="protein sequence ID" value="ENSP00000257570.4"/>
    <property type="gene ID" value="ENSG00000135114.14"/>
</dbReference>
<dbReference type="Ensembl" id="ENST00000339275.10">
    <molecule id="Q15646-2"/>
    <property type="protein sequence ID" value="ENSP00000341125.5"/>
    <property type="gene ID" value="ENSG00000135114.14"/>
</dbReference>
<dbReference type="Ensembl" id="ENST00000543677.2">
    <molecule id="Q15646-2"/>
    <property type="protein sequence ID" value="ENSP00000444127.2"/>
    <property type="gene ID" value="ENSG00000135114.14"/>
</dbReference>
<dbReference type="Ensembl" id="ENST00000620239.6">
    <molecule id="Q15646-3"/>
    <property type="protein sequence ID" value="ENSP00000479512.1"/>
    <property type="gene ID" value="ENSG00000135114.14"/>
</dbReference>
<dbReference type="GeneID" id="8638"/>
<dbReference type="KEGG" id="hsa:8638"/>
<dbReference type="MANE-Select" id="ENST00000257570.10">
    <property type="protein sequence ID" value="ENSP00000257570.4"/>
    <property type="RefSeq nucleotide sequence ID" value="NM_003733.4"/>
    <property type="RefSeq protein sequence ID" value="NP_003724.1"/>
</dbReference>
<dbReference type="UCSC" id="uc001tzj.3">
    <molecule id="Q15646-1"/>
    <property type="organism name" value="human"/>
</dbReference>
<dbReference type="AGR" id="HGNC:8090"/>
<dbReference type="CTD" id="8638"/>
<dbReference type="DisGeNET" id="8638"/>
<dbReference type="GeneCards" id="OASL"/>
<dbReference type="HGNC" id="HGNC:8090">
    <property type="gene designation" value="OASL"/>
</dbReference>
<dbReference type="HPA" id="ENSG00000135114">
    <property type="expression patterns" value="Tissue enhanced (bone marrow, stomach)"/>
</dbReference>
<dbReference type="MIM" id="603281">
    <property type="type" value="gene"/>
</dbReference>
<dbReference type="neXtProt" id="NX_Q15646"/>
<dbReference type="OpenTargets" id="ENSG00000135114"/>
<dbReference type="PharmGKB" id="PA31879"/>
<dbReference type="VEuPathDB" id="HostDB:ENSG00000135114"/>
<dbReference type="eggNOG" id="KOG0001">
    <property type="taxonomic scope" value="Eukaryota"/>
</dbReference>
<dbReference type="GeneTree" id="ENSGT00510000046406"/>
<dbReference type="HOGENOM" id="CLU_040930_1_0_1"/>
<dbReference type="InParanoid" id="Q15646"/>
<dbReference type="OMA" id="VICIYWT"/>
<dbReference type="OrthoDB" id="9534334at2759"/>
<dbReference type="PAN-GO" id="Q15646">
    <property type="GO annotations" value="7 GO annotations based on evolutionary models"/>
</dbReference>
<dbReference type="PhylomeDB" id="Q15646"/>
<dbReference type="TreeFam" id="TF329749"/>
<dbReference type="BRENDA" id="2.7.7.84">
    <property type="organism ID" value="2681"/>
</dbReference>
<dbReference type="PathwayCommons" id="Q15646"/>
<dbReference type="Reactome" id="R-HSA-877300">
    <property type="pathway name" value="Interferon gamma signaling"/>
</dbReference>
<dbReference type="Reactome" id="R-HSA-8983711">
    <property type="pathway name" value="OAS antiviral response"/>
</dbReference>
<dbReference type="Reactome" id="R-HSA-909733">
    <property type="pathway name" value="Interferon alpha/beta signaling"/>
</dbReference>
<dbReference type="SignaLink" id="Q15646"/>
<dbReference type="BioGRID-ORCS" id="8638">
    <property type="hits" value="9 hits in 1149 CRISPR screens"/>
</dbReference>
<dbReference type="ChiTaRS" id="OASL">
    <property type="organism name" value="human"/>
</dbReference>
<dbReference type="EvolutionaryTrace" id="Q15646"/>
<dbReference type="GeneWiki" id="OASL"/>
<dbReference type="GenomeRNAi" id="8638"/>
<dbReference type="Pharos" id="Q15646">
    <property type="development level" value="Tbio"/>
</dbReference>
<dbReference type="PRO" id="PR:Q15646"/>
<dbReference type="Proteomes" id="UP000005640">
    <property type="component" value="Chromosome 12"/>
</dbReference>
<dbReference type="RNAct" id="Q15646">
    <property type="molecule type" value="protein"/>
</dbReference>
<dbReference type="Bgee" id="ENSG00000135114">
    <property type="expression patterns" value="Expressed in granulocyte and 117 other cell types or tissues"/>
</dbReference>
<dbReference type="ExpressionAtlas" id="Q15646">
    <property type="expression patterns" value="baseline and differential"/>
</dbReference>
<dbReference type="GO" id="GO:0005737">
    <property type="term" value="C:cytoplasm"/>
    <property type="evidence" value="ECO:0000314"/>
    <property type="project" value="UniProtKB"/>
</dbReference>
<dbReference type="GO" id="GO:0005829">
    <property type="term" value="C:cytosol"/>
    <property type="evidence" value="ECO:0000314"/>
    <property type="project" value="HPA"/>
</dbReference>
<dbReference type="GO" id="GO:0016020">
    <property type="term" value="C:membrane"/>
    <property type="evidence" value="ECO:0007005"/>
    <property type="project" value="UniProtKB"/>
</dbReference>
<dbReference type="GO" id="GO:0005730">
    <property type="term" value="C:nucleolus"/>
    <property type="evidence" value="ECO:0000314"/>
    <property type="project" value="UniProtKB"/>
</dbReference>
<dbReference type="GO" id="GO:0005654">
    <property type="term" value="C:nucleoplasm"/>
    <property type="evidence" value="ECO:0000314"/>
    <property type="project" value="HPA"/>
</dbReference>
<dbReference type="GO" id="GO:0003677">
    <property type="term" value="F:DNA binding"/>
    <property type="evidence" value="ECO:0000314"/>
    <property type="project" value="UniProtKB"/>
</dbReference>
<dbReference type="GO" id="GO:0003725">
    <property type="term" value="F:double-stranded RNA binding"/>
    <property type="evidence" value="ECO:0000314"/>
    <property type="project" value="UniProtKB"/>
</dbReference>
<dbReference type="GO" id="GO:0046966">
    <property type="term" value="F:nuclear thyroid hormone receptor binding"/>
    <property type="evidence" value="ECO:0000304"/>
    <property type="project" value="UniProtKB"/>
</dbReference>
<dbReference type="GO" id="GO:0016779">
    <property type="term" value="F:nucleotidyltransferase activity"/>
    <property type="evidence" value="ECO:0007669"/>
    <property type="project" value="InterPro"/>
</dbReference>
<dbReference type="GO" id="GO:0003723">
    <property type="term" value="F:RNA binding"/>
    <property type="evidence" value="ECO:0007005"/>
    <property type="project" value="UniProtKB"/>
</dbReference>
<dbReference type="GO" id="GO:0140374">
    <property type="term" value="P:antiviral innate immune response"/>
    <property type="evidence" value="ECO:0000318"/>
    <property type="project" value="GO_Central"/>
</dbReference>
<dbReference type="GO" id="GO:0051607">
    <property type="term" value="P:defense response to virus"/>
    <property type="evidence" value="ECO:0000314"/>
    <property type="project" value="UniProtKB"/>
</dbReference>
<dbReference type="GO" id="GO:0070106">
    <property type="term" value="P:interleukin-27-mediated signaling pathway"/>
    <property type="evidence" value="ECO:0000270"/>
    <property type="project" value="ARUK-UCL"/>
</dbReference>
<dbReference type="GO" id="GO:0045071">
    <property type="term" value="P:negative regulation of viral genome replication"/>
    <property type="evidence" value="ECO:0000314"/>
    <property type="project" value="UniProtKB"/>
</dbReference>
<dbReference type="GO" id="GO:1900246">
    <property type="term" value="P:positive regulation of RIG-I signaling pathway"/>
    <property type="evidence" value="ECO:0000314"/>
    <property type="project" value="ARUK-UCL"/>
</dbReference>
<dbReference type="GO" id="GO:0009615">
    <property type="term" value="P:response to virus"/>
    <property type="evidence" value="ECO:0000314"/>
    <property type="project" value="UniProtKB"/>
</dbReference>
<dbReference type="GO" id="GO:0060337">
    <property type="term" value="P:type I interferon-mediated signaling pathway"/>
    <property type="evidence" value="ECO:0000318"/>
    <property type="project" value="GO_Central"/>
</dbReference>
<dbReference type="CDD" id="cd05400">
    <property type="entry name" value="NT_2-5OAS_ClassI-CCAase"/>
    <property type="match status" value="1"/>
</dbReference>
<dbReference type="CDD" id="cd01811">
    <property type="entry name" value="Ubl1_OASL"/>
    <property type="match status" value="1"/>
</dbReference>
<dbReference type="CDD" id="cd16103">
    <property type="entry name" value="Ubl2_OASL"/>
    <property type="match status" value="1"/>
</dbReference>
<dbReference type="FunFam" id="3.10.20.90:FF:000205">
    <property type="entry name" value="2'-5'-oligoadenylate synthase-like protein 2"/>
    <property type="match status" value="1"/>
</dbReference>
<dbReference type="FunFam" id="1.10.1410.20:FF:000001">
    <property type="entry name" value="2'-5'-oligoadenylate synthetase 1"/>
    <property type="match status" value="1"/>
</dbReference>
<dbReference type="FunFam" id="3.30.460.10:FF:000007">
    <property type="entry name" value="2'-5'-oligoadenylate synthetase 1"/>
    <property type="match status" value="1"/>
</dbReference>
<dbReference type="Gene3D" id="1.10.1410.20">
    <property type="entry name" value="2'-5'-oligoadenylate synthetase 1, domain 2"/>
    <property type="match status" value="1"/>
</dbReference>
<dbReference type="Gene3D" id="3.30.460.10">
    <property type="entry name" value="Beta Polymerase, domain 2"/>
    <property type="match status" value="1"/>
</dbReference>
<dbReference type="Gene3D" id="3.10.20.90">
    <property type="entry name" value="Phosphatidylinositol 3-kinase Catalytic Subunit, Chain A, domain 1"/>
    <property type="match status" value="1"/>
</dbReference>
<dbReference type="InterPro" id="IPR018952">
    <property type="entry name" value="2-5-oligoAdlate_synth_1_dom2/C"/>
</dbReference>
<dbReference type="InterPro" id="IPR006117">
    <property type="entry name" value="2-5OAS_C_CS"/>
</dbReference>
<dbReference type="InterPro" id="IPR043518">
    <property type="entry name" value="2-5OAS_N_CS"/>
</dbReference>
<dbReference type="InterPro" id="IPR006116">
    <property type="entry name" value="NT_2-5OAS_ClassI-CCAase"/>
</dbReference>
<dbReference type="InterPro" id="IPR043519">
    <property type="entry name" value="NT_sf"/>
</dbReference>
<dbReference type="InterPro" id="IPR000626">
    <property type="entry name" value="Ubiquitin-like_dom"/>
</dbReference>
<dbReference type="InterPro" id="IPR029071">
    <property type="entry name" value="Ubiquitin-like_domsf"/>
</dbReference>
<dbReference type="PANTHER" id="PTHR11258:SF16">
    <property type="entry name" value="2'-5'-OLIGOADENYLATE SYNTHASE-LIKE PROTEIN"/>
    <property type="match status" value="1"/>
</dbReference>
<dbReference type="PANTHER" id="PTHR11258">
    <property type="entry name" value="2-5 OLIGOADENYLATE SYNTHETASE"/>
    <property type="match status" value="1"/>
</dbReference>
<dbReference type="Pfam" id="PF10421">
    <property type="entry name" value="OAS1_C"/>
    <property type="match status" value="1"/>
</dbReference>
<dbReference type="Pfam" id="PF00240">
    <property type="entry name" value="ubiquitin"/>
    <property type="match status" value="1"/>
</dbReference>
<dbReference type="SMART" id="SM00213">
    <property type="entry name" value="UBQ"/>
    <property type="match status" value="2"/>
</dbReference>
<dbReference type="SUPFAM" id="SSF81301">
    <property type="entry name" value="Nucleotidyltransferase"/>
    <property type="match status" value="1"/>
</dbReference>
<dbReference type="SUPFAM" id="SSF81631">
    <property type="entry name" value="PAP/OAS1 substrate-binding domain"/>
    <property type="match status" value="1"/>
</dbReference>
<dbReference type="SUPFAM" id="SSF54236">
    <property type="entry name" value="Ubiquitin-like"/>
    <property type="match status" value="2"/>
</dbReference>
<dbReference type="PROSITE" id="PS00832">
    <property type="entry name" value="25A_SYNTH_1"/>
    <property type="match status" value="1"/>
</dbReference>
<dbReference type="PROSITE" id="PS00833">
    <property type="entry name" value="25A_SYNTH_2"/>
    <property type="match status" value="1"/>
</dbReference>
<dbReference type="PROSITE" id="PS50152">
    <property type="entry name" value="25A_SYNTH_3"/>
    <property type="match status" value="1"/>
</dbReference>
<dbReference type="PROSITE" id="PS50053">
    <property type="entry name" value="UBIQUITIN_2"/>
    <property type="match status" value="1"/>
</dbReference>
<feature type="initiator methionine" description="Removed" evidence="10">
    <location>
        <position position="1"/>
    </location>
</feature>
<feature type="chain" id="PRO_0000160266" description="2'-5'-oligoadenylate synthase-like protein">
    <location>
        <begin position="2"/>
        <end position="514"/>
    </location>
</feature>
<feature type="domain" description="Ubiquitin-like 1" evidence="1">
    <location>
        <begin position="354"/>
        <end position="433"/>
    </location>
</feature>
<feature type="domain" description="Ubiquitin-like 2" evidence="1">
    <location>
        <begin position="434"/>
        <end position="509"/>
    </location>
</feature>
<feature type="modified residue" description="N-acetylalanine" evidence="10">
    <location>
        <position position="2"/>
    </location>
</feature>
<feature type="splice variant" id="VSP_046572" description="In isoform 3." evidence="7">
    <location>
        <begin position="220"/>
        <end position="349"/>
    </location>
</feature>
<feature type="splice variant" id="VSP_003743" description="In isoform p30." evidence="8">
    <original>YVKARSPRANLPPLYALELLTIYAWEMGTEEDENFM</original>
    <variation>AHHPGSGRPHPQRGRRVQMGHRCSEGLPVPETGLLL</variation>
    <location>
        <begin position="220"/>
        <end position="255"/>
    </location>
</feature>
<feature type="splice variant" id="VSP_003744" description="In isoform p30." evidence="8">
    <location>
        <begin position="256"/>
        <end position="514"/>
    </location>
</feature>
<feature type="sequence variant" id="VAR_053544" description="In dbSNP:rs35249920.">
    <original>N</original>
    <variation>I</variation>
    <location>
        <position position="341"/>
    </location>
</feature>
<feature type="sequence conflict" description="In Ref. 2; AAD28541/AAD28542." evidence="9" ref="2">
    <original>HREWKEEVLDAVR</original>
    <variation>TGVEGRGARRCA</variation>
    <location>
        <begin position="26"/>
        <end position="38"/>
    </location>
</feature>
<feature type="sequence conflict" description="In Ref. 2; AAD28542." evidence="9" ref="2">
    <original>S</original>
    <variation>T</variation>
    <location>
        <position position="89"/>
    </location>
</feature>
<feature type="sequence conflict" description="In Ref. 2; AAD28541/AAD28542." evidence="9" ref="2">
    <original>QEAAKHHKDVLRLIWKTMW</original>
    <variation>PGGSQASQRCSEADMENHV</variation>
    <location>
        <begin position="95"/>
        <end position="113"/>
    </location>
</feature>
<feature type="sequence conflict" description="In Ref. 2; AAD28541." evidence="9" ref="2">
    <original>A</original>
    <variation>S</variation>
    <location>
        <position position="223"/>
    </location>
</feature>
<feature type="sequence conflict" description="In Ref. 2; AAD28541." evidence="9" ref="2">
    <original>Y</original>
    <variation>I</variation>
    <location>
        <position position="317"/>
    </location>
</feature>
<feature type="sequence conflict" description="In Ref. 2; AAD28541." evidence="9" ref="2">
    <original>I</original>
    <variation>T</variation>
    <location>
        <position position="321"/>
    </location>
</feature>
<feature type="sequence conflict" description="In Ref. 2; AAD28541." evidence="9" ref="2">
    <original>Q</original>
    <variation>L</variation>
    <location>
        <position position="324"/>
    </location>
</feature>
<feature type="sequence conflict" description="In Ref. 7; AAC41733." evidence="9" ref="7">
    <original>NP</original>
    <variation>KG</variation>
    <location>
        <begin position="341"/>
        <end position="342"/>
    </location>
</feature>
<feature type="sequence conflict" description="In Ref. 4; BAG37039." evidence="9" ref="4">
    <original>L</original>
    <variation>F</variation>
    <location>
        <position position="407"/>
    </location>
</feature>
<feature type="sequence conflict" description="In Ref. 2; AAD28541." evidence="9" ref="2">
    <original>S</original>
    <variation>T</variation>
    <location>
        <position position="445"/>
    </location>
</feature>
<feature type="helix" evidence="12">
    <location>
        <begin position="7"/>
        <end position="9"/>
    </location>
</feature>
<feature type="helix" evidence="12">
    <location>
        <begin position="12"/>
        <end position="14"/>
    </location>
</feature>
<feature type="helix" evidence="12">
    <location>
        <begin position="15"/>
        <end position="22"/>
    </location>
</feature>
<feature type="helix" evidence="12">
    <location>
        <begin position="27"/>
        <end position="46"/>
    </location>
</feature>
<feature type="strand" evidence="12">
    <location>
        <begin position="61"/>
        <end position="67"/>
    </location>
</feature>
<feature type="helix" evidence="12">
    <location>
        <begin position="68"/>
        <end position="72"/>
    </location>
</feature>
<feature type="strand" evidence="12">
    <location>
        <begin position="81"/>
        <end position="88"/>
    </location>
</feature>
<feature type="helix" evidence="12">
    <location>
        <begin position="94"/>
        <end position="112"/>
    </location>
</feature>
<feature type="helix" evidence="12">
    <location>
        <begin position="116"/>
        <end position="119"/>
    </location>
</feature>
<feature type="turn" evidence="12">
    <location>
        <begin position="120"/>
        <end position="122"/>
    </location>
</feature>
<feature type="strand" evidence="12">
    <location>
        <begin position="124"/>
        <end position="129"/>
    </location>
</feature>
<feature type="strand" evidence="12">
    <location>
        <begin position="131"/>
        <end position="133"/>
    </location>
</feature>
<feature type="strand" evidence="12">
    <location>
        <begin position="135"/>
        <end position="141"/>
    </location>
</feature>
<feature type="turn" evidence="12">
    <location>
        <begin position="143"/>
        <end position="145"/>
    </location>
</feature>
<feature type="strand" evidence="12">
    <location>
        <begin position="148"/>
        <end position="156"/>
    </location>
</feature>
<feature type="helix" evidence="12">
    <location>
        <begin position="171"/>
        <end position="180"/>
    </location>
</feature>
<feature type="helix" evidence="12">
    <location>
        <begin position="189"/>
        <end position="191"/>
    </location>
</feature>
<feature type="helix" evidence="12">
    <location>
        <begin position="192"/>
        <end position="200"/>
    </location>
</feature>
<feature type="helix" evidence="12">
    <location>
        <begin position="204"/>
        <end position="220"/>
    </location>
</feature>
<feature type="helix" evidence="12">
    <location>
        <begin position="222"/>
        <end position="224"/>
    </location>
</feature>
<feature type="helix" evidence="12">
    <location>
        <begin position="233"/>
        <end position="248"/>
    </location>
</feature>
<feature type="helix" evidence="12">
    <location>
        <begin position="256"/>
        <end position="268"/>
    </location>
</feature>
<feature type="helix" evidence="12">
    <location>
        <begin position="269"/>
        <end position="272"/>
    </location>
</feature>
<feature type="helix" evidence="12">
    <location>
        <begin position="286"/>
        <end position="296"/>
    </location>
</feature>
<feature type="strand" evidence="12">
    <location>
        <begin position="298"/>
        <end position="300"/>
    </location>
</feature>
<feature type="strand" evidence="12">
    <location>
        <begin position="302"/>
        <end position="304"/>
    </location>
</feature>
<feature type="turn" evidence="12">
    <location>
        <begin position="313"/>
        <end position="316"/>
    </location>
</feature>
<feature type="helix" evidence="12">
    <location>
        <begin position="319"/>
        <end position="329"/>
    </location>
</feature>
<feature type="helix" evidence="12">
    <location>
        <begin position="333"/>
        <end position="335"/>
    </location>
</feature>
<feature type="strand" evidence="11">
    <location>
        <begin position="434"/>
        <end position="440"/>
    </location>
</feature>
<feature type="turn" evidence="11">
    <location>
        <begin position="441"/>
        <end position="443"/>
    </location>
</feature>
<feature type="strand" evidence="11">
    <location>
        <begin position="444"/>
        <end position="450"/>
    </location>
</feature>
<feature type="strand" evidence="11">
    <location>
        <begin position="452"/>
        <end position="455"/>
    </location>
</feature>
<feature type="helix" evidence="11">
    <location>
        <begin position="456"/>
        <end position="466"/>
    </location>
</feature>
<feature type="turn" evidence="11">
    <location>
        <begin position="471"/>
        <end position="473"/>
    </location>
</feature>
<feature type="strand" evidence="11">
    <location>
        <begin position="474"/>
        <end position="478"/>
    </location>
</feature>
<feature type="strand" evidence="11">
    <location>
        <begin position="485"/>
        <end position="488"/>
    </location>
</feature>
<feature type="helix" evidence="11">
    <location>
        <begin position="489"/>
        <end position="492"/>
    </location>
</feature>
<feature type="strand" evidence="11">
    <location>
        <begin position="498"/>
        <end position="504"/>
    </location>
</feature>
<accession>Q15646</accession>
<accession>B2RAZ2</accession>
<accession>I1YDD2</accession>
<accession>O75686</accession>
<accession>Q17R95</accession>
<accession>Q9Y6K6</accession>
<accession>Q9Y6K7</accession>
<protein>
    <recommendedName>
        <fullName>2'-5'-oligoadenylate synthase-like protein</fullName>
    </recommendedName>
    <alternativeName>
        <fullName>2'-5'-OAS-related protein</fullName>
        <shortName>2'-5'-OAS-RP</shortName>
    </alternativeName>
    <alternativeName>
        <fullName>59 kDa 2'-5'-oligoadenylate synthase-like protein</fullName>
    </alternativeName>
    <alternativeName>
        <fullName>Thyroid receptor-interacting protein 14</fullName>
        <shortName>TR-interacting protein 14</shortName>
        <shortName>TRIP-14</shortName>
    </alternativeName>
    <alternativeName>
        <fullName>p59 OASL</fullName>
        <shortName>p59OASL</shortName>
    </alternativeName>
</protein>
<sequence>MALMQELYSTPASRLDSFVAQWLQPHREWKEEVLDAVRTVEEFLRQEHFQGKRGLDQDVRVLKVVKVGSFGNGTVLRSTREVELVAFLSCFHSFQEAAKHHKDVLRLIWKTMWQSQDLLDLGLEDLRMEQRVPDALVFTIQTRGTAEPITVTIVPAYRALGPSLPNSQPPPEVYVSLIKACGGPGNFCPSFSELQRNFVKHRPTKLKSLLRLVKHWYQQYVKARSPRANLPPLYALELLTIYAWEMGTEEDENFMLDEGFTTVMDLLLEYEVICIYWTKYYTLHNAIIEDCVRKQLKKERPIILDPADPTLNVAEGYRWDIVAQRASQCLKQDCCYDNRENPISSWNVKRARDIHLTVEQRGYPDFNLIVNPYEPIRKVKEKIRRTRGYSGLQRLSFQVPGSERQLLSSRCSLAKYGIFSHTHIYLLETIPSEIQVFVKNPDGGSYAYAINPNSFILGLKQQIEDQQGLPKKQQQLEFQGQVLQDWLGLGIYGIQDSDTLILSKKKGEALFPAS</sequence>
<comment type="function">
    <text evidence="3 5 6">Does not have 2'-5'-OAS activity, but can bind double-stranded RNA. Displays antiviral activity against encephalomyocarditis virus (EMCV) and hepatitis C virus (HCV) via an alternative antiviral pathway independent of RNase L.</text>
</comment>
<comment type="subunit">
    <text evidence="2">Specifically interacts with the ligand binding domain of the thyroid receptor (TR). TRIP14 does not require the presence of thyroid hormone for its interaction. Binds MBD1.</text>
</comment>
<comment type="interaction">
    <interactant intactId="EBI-3918068">
        <id>Q15646</id>
    </interactant>
    <interactant intactId="EBI-2371923">
        <id>Q4G0J3</id>
        <label>LARP7</label>
    </interactant>
    <organismsDiffer>false</organismsDiffer>
    <experiments>3</experiments>
</comment>
<comment type="subcellular location">
    <molecule>Isoform p56</molecule>
    <subcellularLocation>
        <location>Nucleus</location>
        <location>Nucleolus</location>
    </subcellularLocation>
    <subcellularLocation>
        <location>Cytoplasm</location>
    </subcellularLocation>
</comment>
<comment type="subcellular location">
    <molecule>Isoform p30</molecule>
    <subcellularLocation>
        <location>Cytoplasm</location>
    </subcellularLocation>
</comment>
<comment type="alternative products">
    <event type="alternative splicing"/>
    <isoform>
        <id>Q15646-1</id>
        <name>p56</name>
        <name>OASL a</name>
        <sequence type="displayed"/>
    </isoform>
    <isoform>
        <id>Q15646-2</id>
        <name>p30</name>
        <sequence type="described" ref="VSP_003743 VSP_003744"/>
    </isoform>
    <isoform>
        <id>Q15646-3</id>
        <name>3</name>
        <name>OASL d</name>
        <sequence type="described" ref="VSP_046572"/>
    </isoform>
</comment>
<comment type="tissue specificity">
    <text>Expressed in most tissues, with the highest levels in primary blood Leukocytes and other hematopoietic system tissues, colon, stomach and to some extent in testis.</text>
</comment>
<comment type="induction">
    <text evidence="4 5">By type I interferon (IFN) and viruses.</text>
</comment>
<comment type="domain">
    <text>The ubiquitin-like domains are essential for its antiviral activity.</text>
</comment>
<comment type="miscellaneous">
    <molecule>Isoform 3</molecule>
    <text evidence="9">Has antiviral activity against RNA viruses.</text>
</comment>
<comment type="similarity">
    <text evidence="9">Belongs to the 2-5A synthase family.</text>
</comment>
<comment type="caution">
    <text evidence="9">This is the ortholog of mouse OASL1.</text>
</comment>
<comment type="sequence caution" evidence="9">
    <conflict type="frameshift">
        <sequence resource="EMBL-CDS" id="AAC41733"/>
    </conflict>
</comment>
<evidence type="ECO:0000255" key="1">
    <source>
        <dbReference type="PROSITE-ProRule" id="PRU00214"/>
    </source>
</evidence>
<evidence type="ECO:0000269" key="2">
    <source>
    </source>
</evidence>
<evidence type="ECO:0000269" key="3">
    <source>
    </source>
</evidence>
<evidence type="ECO:0000269" key="4">
    <source>
    </source>
</evidence>
<evidence type="ECO:0000269" key="5">
    <source>
    </source>
</evidence>
<evidence type="ECO:0000269" key="6">
    <source>
    </source>
</evidence>
<evidence type="ECO:0000303" key="7">
    <source>
    </source>
</evidence>
<evidence type="ECO:0000303" key="8">
    <source>
    </source>
</evidence>
<evidence type="ECO:0000305" key="9"/>
<evidence type="ECO:0007744" key="10">
    <source>
    </source>
</evidence>
<evidence type="ECO:0007829" key="11">
    <source>
        <dbReference type="PDB" id="1WH3"/>
    </source>
</evidence>
<evidence type="ECO:0007829" key="12">
    <source>
        <dbReference type="PDB" id="4XQ7"/>
    </source>
</evidence>
<gene>
    <name type="primary">OASL</name>
    <name type="synonym">TRIP14</name>
</gene>
<name>OASL_HUMAN</name>
<keyword id="KW-0002">3D-structure</keyword>
<keyword id="KW-0007">Acetylation</keyword>
<keyword id="KW-0025">Alternative splicing</keyword>
<keyword id="KW-0051">Antiviral defense</keyword>
<keyword id="KW-0963">Cytoplasm</keyword>
<keyword id="KW-0391">Immunity</keyword>
<keyword id="KW-0399">Innate immunity</keyword>
<keyword id="KW-0539">Nucleus</keyword>
<keyword id="KW-1267">Proteomics identification</keyword>
<keyword id="KW-1185">Reference proteome</keyword>
<keyword id="KW-0677">Repeat</keyword>
<keyword id="KW-0694">RNA-binding</keyword>
<proteinExistence type="evidence at protein level"/>